<protein>
    <recommendedName>
        <fullName>Sodium-dependent phosphate transport protein 2C</fullName>
        <shortName>Sodium-phosphate transport protein 2C</shortName>
    </recommendedName>
    <alternativeName>
        <fullName>Na(+)-dependent phosphate cotransporter 2C</fullName>
    </alternativeName>
    <alternativeName>
        <fullName>Sodium/phosphate cotransporter 2C</fullName>
        <shortName>Na(+)/Pi cotransporter 2C</shortName>
        <shortName>NaPi-2c</shortName>
    </alternativeName>
    <alternativeName>
        <fullName>Solute carrier family 34 member 3</fullName>
    </alternativeName>
</protein>
<sequence>MPNSLAGDQVPNPTLDAIGLVDWSLRNAGTSGSTPGLEEGGTDPWTFSQLKNTDQLKEVGTASKLHQVVSGFLKACGLLGSLYFFICSLDILSSAFQLLGSKMAGDIFKDNVVLSNPVAGLVIGVVVTVLVQSSSTSSSIVVSMVASKSLTVQASVPIIMGVNVGTSITSTLVSMAQSGDRDEFQRAFGGSAVHGIFNWLTVLVLLPLENATAALERLSELALGAASLQPGGQAPDILKALTRPFTHLIIQLDSSVVTSSITSNTTNSSLIKHWCGFRGETPQGSSEECDLSGSCTERNSSASPGEDRLLCHHLFAGSELTDLAVGFILLAGSLLVLCVCLVLIVKLLNSVLRGRIAQAVKTVINADFPFPFGWLSGYLAILVGAGLTFLLQSSSVFTAAIVPLMGVGVINLERAYPLFLGSNIGTTTTALLAALASPADTLLFAVQVALIHFFFNLAGILLWYLVPVLRLPIPLAKRFGDLTAQYRWVAIVYLLLTFLLLPLAAFGLSLAGGSVLAAVGGPLVGLVLLIILVNVLQRHRPSWLPRRLQSWAWLPLWLHSLEPWDRLVTGCCPFKAYSNSHMTSKVAHCYENPQVIASQQL</sequence>
<keyword id="KW-1003">Cell membrane</keyword>
<keyword id="KW-1015">Disulfide bond</keyword>
<keyword id="KW-0325">Glycoprotein</keyword>
<keyword id="KW-0406">Ion transport</keyword>
<keyword id="KW-0472">Membrane</keyword>
<keyword id="KW-0597">Phosphoprotein</keyword>
<keyword id="KW-1185">Reference proteome</keyword>
<keyword id="KW-0915">Sodium</keyword>
<keyword id="KW-0739">Sodium transport</keyword>
<keyword id="KW-0769">Symport</keyword>
<keyword id="KW-0812">Transmembrane</keyword>
<keyword id="KW-1133">Transmembrane helix</keyword>
<keyword id="KW-0813">Transport</keyword>
<name>NPT2C_RAT</name>
<accession>Q8K4R8</accession>
<feature type="chain" id="PRO_0000068619" description="Sodium-dependent phosphate transport protein 2C">
    <location>
        <begin position="1"/>
        <end position="601"/>
    </location>
</feature>
<feature type="topological domain" description="Cytoplasmic" evidence="3">
    <location>
        <begin position="1"/>
        <end position="75"/>
    </location>
</feature>
<feature type="transmembrane region" description="Helical; Name=M1" evidence="3">
    <location>
        <begin position="76"/>
        <end position="96"/>
    </location>
</feature>
<feature type="topological domain" description="Extracellular" evidence="3">
    <location>
        <begin position="97"/>
        <end position="110"/>
    </location>
</feature>
<feature type="transmembrane region" description="Helical; Name=M2" evidence="3">
    <location>
        <begin position="111"/>
        <end position="131"/>
    </location>
</feature>
<feature type="topological domain" description="Cytoplasmic" evidence="3">
    <location>
        <begin position="132"/>
        <end position="187"/>
    </location>
</feature>
<feature type="transmembrane region" description="Helical; Name=M3" evidence="3">
    <location>
        <begin position="188"/>
        <end position="208"/>
    </location>
</feature>
<feature type="topological domain" description="Extracellular" evidence="3">
    <location>
        <begin position="209"/>
        <end position="324"/>
    </location>
</feature>
<feature type="transmembrane region" description="Helical; Name=M4" evidence="3">
    <location>
        <begin position="325"/>
        <end position="345"/>
    </location>
</feature>
<feature type="topological domain" description="Cytoplasmic" evidence="3">
    <location>
        <begin position="346"/>
        <end position="369"/>
    </location>
</feature>
<feature type="transmembrane region" description="Helical; Name=M5" evidence="3">
    <location>
        <begin position="370"/>
        <end position="390"/>
    </location>
</feature>
<feature type="topological domain" description="Extracellular" evidence="3">
    <location>
        <begin position="391"/>
        <end position="447"/>
    </location>
</feature>
<feature type="transmembrane region" description="Helical; Name=M6" evidence="3">
    <location>
        <begin position="448"/>
        <end position="468"/>
    </location>
</feature>
<feature type="topological domain" description="Cytoplasmic" evidence="3">
    <location>
        <begin position="469"/>
        <end position="487"/>
    </location>
</feature>
<feature type="transmembrane region" description="Helical; Name=M7" evidence="3">
    <location>
        <begin position="488"/>
        <end position="508"/>
    </location>
</feature>
<feature type="topological domain" description="Extracellular" evidence="3">
    <location>
        <begin position="509"/>
        <end position="512"/>
    </location>
</feature>
<feature type="transmembrane region" description="Helical; Name=M8" evidence="3">
    <location>
        <begin position="513"/>
        <end position="533"/>
    </location>
</feature>
<feature type="topological domain" description="Cytoplasmic" evidence="3">
    <location>
        <begin position="534"/>
        <end position="601"/>
    </location>
</feature>
<feature type="modified residue" description="Phosphoserine" evidence="7">
    <location>
        <position position="4"/>
    </location>
</feature>
<feature type="glycosylation site" description="N-linked (GlcNAc...) asparagine" evidence="3">
    <location>
        <position position="210"/>
    </location>
</feature>
<feature type="glycosylation site" description="N-linked (GlcNAc...) asparagine" evidence="3">
    <location>
        <position position="264"/>
    </location>
</feature>
<feature type="glycosylation site" description="N-linked (GlcNAc...) asparagine" evidence="3">
    <location>
        <position position="267"/>
    </location>
</feature>
<feature type="glycosylation site" description="N-linked (GlcNAc...) asparagine" evidence="3">
    <location>
        <position position="299"/>
    </location>
</feature>
<feature type="disulfide bond" evidence="1">
    <location>
        <begin position="275"/>
        <end position="311"/>
    </location>
</feature>
<comment type="function">
    <text evidence="2 4">Involved in actively transporting phosphate into cells via Na(+) cotransport in the renal brush border membrane (PubMed:11880379). The cotransport has a Na(+):Pi stoichiometry of 2:1 and is electroneutral (By similarity).</text>
</comment>
<comment type="catalytic activity">
    <reaction evidence="4">
        <text>2 Na(+)(out) + phosphate(out) = 2 Na(+)(in) + phosphate(in)</text>
        <dbReference type="Rhea" id="RHEA:71259"/>
        <dbReference type="ChEBI" id="CHEBI:29101"/>
        <dbReference type="ChEBI" id="CHEBI:43474"/>
    </reaction>
    <physiologicalReaction direction="left-to-right" evidence="6">
        <dbReference type="Rhea" id="RHEA:71260"/>
    </physiologicalReaction>
</comment>
<comment type="subcellular location">
    <subcellularLocation>
        <location evidence="4">Apical cell membrane</location>
        <topology evidence="3">Multi-pass membrane protein</topology>
    </subcellularLocation>
    <text evidence="4">Localized at the brush border membrane in the kidney.</text>
</comment>
<comment type="tissue specificity">
    <text evidence="4">Highly expressed in the kidney. Not found in any of the other tested tissues.</text>
</comment>
<comment type="developmental stage">
    <text evidence="4">Highest kidney expression is found in weaning rat followed by adult. Lowest expression is found in suckling rat.</text>
</comment>
<comment type="similarity">
    <text evidence="5">Belongs to the SLC34A transporter family.</text>
</comment>
<proteinExistence type="evidence at protein level"/>
<gene>
    <name type="primary">Slc34a3</name>
</gene>
<reference key="1">
    <citation type="journal article" date="2002" name="J. Biol. Chem.">
        <title>Growth-related renal type II Na/Pi cotransporter.</title>
        <authorList>
            <person name="Segawa H."/>
            <person name="Kaneko I."/>
            <person name="Takahashi A."/>
            <person name="Kuwahata M."/>
            <person name="Ito M."/>
            <person name="Ohkido I."/>
            <person name="Tatsumi S."/>
            <person name="Miyamoto K."/>
        </authorList>
    </citation>
    <scope>NUCLEOTIDE SEQUENCE [MRNA]</scope>
    <scope>DEVELOPMENTAL STAGE</scope>
    <scope>TISSUE SPECIFICITY</scope>
    <scope>FUNCTION</scope>
    <scope>TRANSPORTER ACTIVITY</scope>
    <scope>SUBCELLULAR LOCATION</scope>
    <source>
        <strain>Wistar</strain>
        <tissue>Kidney</tissue>
    </source>
</reference>
<reference key="2">
    <citation type="journal article" date="2012" name="Nat. Commun.">
        <title>Quantitative maps of protein phosphorylation sites across 14 different rat organs and tissues.</title>
        <authorList>
            <person name="Lundby A."/>
            <person name="Secher A."/>
            <person name="Lage K."/>
            <person name="Nordsborg N.B."/>
            <person name="Dmytriyev A."/>
            <person name="Lundby C."/>
            <person name="Olsen J.V."/>
        </authorList>
    </citation>
    <scope>PHOSPHORYLATION [LARGE SCALE ANALYSIS] AT SER-4</scope>
    <scope>IDENTIFICATION BY MASS SPECTROMETRY [LARGE SCALE ANALYSIS]</scope>
</reference>
<dbReference type="EMBL" id="AB077042">
    <property type="protein sequence ID" value="BAB96817.1"/>
    <property type="molecule type" value="mRNA"/>
</dbReference>
<dbReference type="RefSeq" id="NP_647554.1">
    <property type="nucleotide sequence ID" value="NM_139338.2"/>
</dbReference>
<dbReference type="SMR" id="Q8K4R8"/>
<dbReference type="FunCoup" id="Q8K4R8">
    <property type="interactions" value="48"/>
</dbReference>
<dbReference type="IntAct" id="Q8K4R8">
    <property type="interactions" value="1"/>
</dbReference>
<dbReference type="STRING" id="10116.ENSRNOP00000074364"/>
<dbReference type="BindingDB" id="Q8K4R8"/>
<dbReference type="ChEMBL" id="CHEMBL4295898"/>
<dbReference type="GlyCosmos" id="Q8K4R8">
    <property type="glycosylation" value="4 sites, No reported glycans"/>
</dbReference>
<dbReference type="GlyGen" id="Q8K4R8">
    <property type="glycosylation" value="5 sites"/>
</dbReference>
<dbReference type="iPTMnet" id="Q8K4R8"/>
<dbReference type="PhosphoSitePlus" id="Q8K4R8"/>
<dbReference type="PaxDb" id="10116-ENSRNOP00000014060"/>
<dbReference type="GeneID" id="246234"/>
<dbReference type="KEGG" id="rno:246234"/>
<dbReference type="UCSC" id="RGD:708551">
    <property type="organism name" value="rat"/>
</dbReference>
<dbReference type="AGR" id="RGD:708551"/>
<dbReference type="CTD" id="142680"/>
<dbReference type="RGD" id="708551">
    <property type="gene designation" value="Slc34a3"/>
</dbReference>
<dbReference type="eggNOG" id="ENOG502QTG0">
    <property type="taxonomic scope" value="Eukaryota"/>
</dbReference>
<dbReference type="InParanoid" id="Q8K4R8"/>
<dbReference type="PhylomeDB" id="Q8K4R8"/>
<dbReference type="Reactome" id="R-RNO-427589">
    <property type="pathway name" value="Type II Na+/Pi cotransporters"/>
</dbReference>
<dbReference type="PRO" id="PR:Q8K4R8"/>
<dbReference type="Proteomes" id="UP000002494">
    <property type="component" value="Unplaced"/>
</dbReference>
<dbReference type="GO" id="GO:0016324">
    <property type="term" value="C:apical plasma membrane"/>
    <property type="evidence" value="ECO:0000314"/>
    <property type="project" value="RGD"/>
</dbReference>
<dbReference type="GO" id="GO:0005903">
    <property type="term" value="C:brush border"/>
    <property type="evidence" value="ECO:0000266"/>
    <property type="project" value="RGD"/>
</dbReference>
<dbReference type="GO" id="GO:0031526">
    <property type="term" value="C:brush border membrane"/>
    <property type="evidence" value="ECO:0000314"/>
    <property type="project" value="UniProtKB"/>
</dbReference>
<dbReference type="GO" id="GO:0031982">
    <property type="term" value="C:vesicle"/>
    <property type="evidence" value="ECO:0000318"/>
    <property type="project" value="GO_Central"/>
</dbReference>
<dbReference type="GO" id="GO:0005436">
    <property type="term" value="F:sodium:phosphate symporter activity"/>
    <property type="evidence" value="ECO:0000315"/>
    <property type="project" value="RGD"/>
</dbReference>
<dbReference type="GO" id="GO:0030643">
    <property type="term" value="P:intracellular phosphate ion homeostasis"/>
    <property type="evidence" value="ECO:0000266"/>
    <property type="project" value="RGD"/>
</dbReference>
<dbReference type="GO" id="GO:0006817">
    <property type="term" value="P:phosphate ion transport"/>
    <property type="evidence" value="ECO:0000315"/>
    <property type="project" value="RGD"/>
</dbReference>
<dbReference type="GO" id="GO:0032026">
    <property type="term" value="P:response to magnesium ion"/>
    <property type="evidence" value="ECO:0000270"/>
    <property type="project" value="RGD"/>
</dbReference>
<dbReference type="GO" id="GO:0031667">
    <property type="term" value="P:response to nutrient levels"/>
    <property type="evidence" value="ECO:0000270"/>
    <property type="project" value="RGD"/>
</dbReference>
<dbReference type="GO" id="GO:0006814">
    <property type="term" value="P:sodium ion transport"/>
    <property type="evidence" value="ECO:0000266"/>
    <property type="project" value="RGD"/>
</dbReference>
<dbReference type="GO" id="GO:0044341">
    <property type="term" value="P:sodium-dependent phosphate transport"/>
    <property type="evidence" value="ECO:0000315"/>
    <property type="project" value="RGD"/>
</dbReference>
<dbReference type="InterPro" id="IPR003841">
    <property type="entry name" value="Na/Pi_transpt"/>
</dbReference>
<dbReference type="NCBIfam" id="TIGR01013">
    <property type="entry name" value="2a58"/>
    <property type="match status" value="1"/>
</dbReference>
<dbReference type="NCBIfam" id="NF037997">
    <property type="entry name" value="Na_Pi_symport"/>
    <property type="match status" value="1"/>
</dbReference>
<dbReference type="PANTHER" id="PTHR10010:SF35">
    <property type="entry name" value="SODIUM-DEPENDENT PHOSPHATE TRANSPORT PROTEIN 2C"/>
    <property type="match status" value="1"/>
</dbReference>
<dbReference type="PANTHER" id="PTHR10010">
    <property type="entry name" value="SOLUTE CARRIER FAMILY 34 SODIUM PHOSPHATE , MEMBER 2-RELATED"/>
    <property type="match status" value="1"/>
</dbReference>
<dbReference type="Pfam" id="PF02690">
    <property type="entry name" value="Na_Pi_cotrans"/>
    <property type="match status" value="2"/>
</dbReference>
<organism>
    <name type="scientific">Rattus norvegicus</name>
    <name type="common">Rat</name>
    <dbReference type="NCBI Taxonomy" id="10116"/>
    <lineage>
        <taxon>Eukaryota</taxon>
        <taxon>Metazoa</taxon>
        <taxon>Chordata</taxon>
        <taxon>Craniata</taxon>
        <taxon>Vertebrata</taxon>
        <taxon>Euteleostomi</taxon>
        <taxon>Mammalia</taxon>
        <taxon>Eutheria</taxon>
        <taxon>Euarchontoglires</taxon>
        <taxon>Glires</taxon>
        <taxon>Rodentia</taxon>
        <taxon>Myomorpha</taxon>
        <taxon>Muroidea</taxon>
        <taxon>Muridae</taxon>
        <taxon>Murinae</taxon>
        <taxon>Rattus</taxon>
    </lineage>
</organism>
<evidence type="ECO:0000250" key="1">
    <source>
        <dbReference type="UniProtKB" id="Q06496"/>
    </source>
</evidence>
<evidence type="ECO:0000250" key="2">
    <source>
        <dbReference type="UniProtKB" id="Q80SU6"/>
    </source>
</evidence>
<evidence type="ECO:0000255" key="3"/>
<evidence type="ECO:0000269" key="4">
    <source>
    </source>
</evidence>
<evidence type="ECO:0000305" key="5"/>
<evidence type="ECO:0000305" key="6">
    <source>
    </source>
</evidence>
<evidence type="ECO:0007744" key="7">
    <source>
    </source>
</evidence>